<comment type="function">
    <text evidence="1">Essential cell division protein that forms a contractile ring structure (Z ring) at the future cell division site. The regulation of the ring assembly controls the timing and the location of cell division. One of the functions of the FtsZ ring is to recruit other cell division proteins to the septum to produce a new cell wall between the dividing cells. Binds GTP and shows GTPase activity.</text>
</comment>
<comment type="subunit">
    <text evidence="1">Homodimer. Polymerizes to form a dynamic ring structure in a strictly GTP-dependent manner. Interacts directly with several other division proteins.</text>
</comment>
<comment type="subcellular location">
    <subcellularLocation>
        <location evidence="1">Cytoplasm</location>
    </subcellularLocation>
    <text evidence="1">Assembles at midcell at the inner surface of the cytoplasmic membrane.</text>
</comment>
<comment type="similarity">
    <text evidence="1">Belongs to the FtsZ family.</text>
</comment>
<name>FTSZ_MYCBO</name>
<gene>
    <name evidence="1" type="primary">ftsZ</name>
    <name type="ordered locus">BQ2027_MB2174C</name>
</gene>
<dbReference type="EMBL" id="LT708304">
    <property type="protein sequence ID" value="SIU00782.1"/>
    <property type="molecule type" value="Genomic_DNA"/>
</dbReference>
<dbReference type="RefSeq" id="NP_855823.1">
    <property type="nucleotide sequence ID" value="NC_002945.3"/>
</dbReference>
<dbReference type="RefSeq" id="WP_003411144.1">
    <property type="nucleotide sequence ID" value="NC_002945.4"/>
</dbReference>
<dbReference type="SMR" id="P64171"/>
<dbReference type="GeneID" id="45426128"/>
<dbReference type="KEGG" id="mbo:BQ2027_MB2174C"/>
<dbReference type="PATRIC" id="fig|233413.5.peg.2390"/>
<dbReference type="Proteomes" id="UP000001419">
    <property type="component" value="Chromosome"/>
</dbReference>
<dbReference type="GO" id="GO:0032153">
    <property type="term" value="C:cell division site"/>
    <property type="evidence" value="ECO:0007669"/>
    <property type="project" value="UniProtKB-UniRule"/>
</dbReference>
<dbReference type="GO" id="GO:0005737">
    <property type="term" value="C:cytoplasm"/>
    <property type="evidence" value="ECO:0007669"/>
    <property type="project" value="UniProtKB-SubCell"/>
</dbReference>
<dbReference type="GO" id="GO:0005525">
    <property type="term" value="F:GTP binding"/>
    <property type="evidence" value="ECO:0007669"/>
    <property type="project" value="UniProtKB-UniRule"/>
</dbReference>
<dbReference type="GO" id="GO:0003924">
    <property type="term" value="F:GTPase activity"/>
    <property type="evidence" value="ECO:0007669"/>
    <property type="project" value="UniProtKB-UniRule"/>
</dbReference>
<dbReference type="GO" id="GO:0000917">
    <property type="term" value="P:division septum assembly"/>
    <property type="evidence" value="ECO:0007669"/>
    <property type="project" value="UniProtKB-KW"/>
</dbReference>
<dbReference type="GO" id="GO:0043093">
    <property type="term" value="P:FtsZ-dependent cytokinesis"/>
    <property type="evidence" value="ECO:0007669"/>
    <property type="project" value="UniProtKB-UniRule"/>
</dbReference>
<dbReference type="GO" id="GO:0051258">
    <property type="term" value="P:protein polymerization"/>
    <property type="evidence" value="ECO:0007669"/>
    <property type="project" value="UniProtKB-UniRule"/>
</dbReference>
<dbReference type="CDD" id="cd02201">
    <property type="entry name" value="FtsZ_type1"/>
    <property type="match status" value="1"/>
</dbReference>
<dbReference type="FunFam" id="3.30.1330.20:FF:000005">
    <property type="entry name" value="Cell division protein FtsZ"/>
    <property type="match status" value="1"/>
</dbReference>
<dbReference type="FunFam" id="3.40.50.1440:FF:000001">
    <property type="entry name" value="Cell division protein FtsZ"/>
    <property type="match status" value="1"/>
</dbReference>
<dbReference type="Gene3D" id="3.30.1330.20">
    <property type="entry name" value="Tubulin/FtsZ, C-terminal domain"/>
    <property type="match status" value="1"/>
</dbReference>
<dbReference type="Gene3D" id="3.40.50.1440">
    <property type="entry name" value="Tubulin/FtsZ, GTPase domain"/>
    <property type="match status" value="1"/>
</dbReference>
<dbReference type="HAMAP" id="MF_00909">
    <property type="entry name" value="FtsZ"/>
    <property type="match status" value="1"/>
</dbReference>
<dbReference type="InterPro" id="IPR000158">
    <property type="entry name" value="Cell_div_FtsZ"/>
</dbReference>
<dbReference type="InterPro" id="IPR020805">
    <property type="entry name" value="Cell_div_FtsZ_CS"/>
</dbReference>
<dbReference type="InterPro" id="IPR045061">
    <property type="entry name" value="FtsZ/CetZ"/>
</dbReference>
<dbReference type="InterPro" id="IPR024757">
    <property type="entry name" value="FtsZ_C"/>
</dbReference>
<dbReference type="InterPro" id="IPR008280">
    <property type="entry name" value="Tub_FtsZ_C"/>
</dbReference>
<dbReference type="InterPro" id="IPR037103">
    <property type="entry name" value="Tubulin/FtsZ-like_C"/>
</dbReference>
<dbReference type="InterPro" id="IPR018316">
    <property type="entry name" value="Tubulin/FtsZ_2-layer-sand-dom"/>
</dbReference>
<dbReference type="InterPro" id="IPR036525">
    <property type="entry name" value="Tubulin/FtsZ_GTPase_sf"/>
</dbReference>
<dbReference type="InterPro" id="IPR003008">
    <property type="entry name" value="Tubulin_FtsZ_GTPase"/>
</dbReference>
<dbReference type="NCBIfam" id="TIGR00065">
    <property type="entry name" value="ftsZ"/>
    <property type="match status" value="1"/>
</dbReference>
<dbReference type="PANTHER" id="PTHR30314">
    <property type="entry name" value="CELL DIVISION PROTEIN FTSZ-RELATED"/>
    <property type="match status" value="1"/>
</dbReference>
<dbReference type="PANTHER" id="PTHR30314:SF3">
    <property type="entry name" value="MITOCHONDRIAL DIVISION PROTEIN FSZA"/>
    <property type="match status" value="1"/>
</dbReference>
<dbReference type="Pfam" id="PF12327">
    <property type="entry name" value="FtsZ_C"/>
    <property type="match status" value="1"/>
</dbReference>
<dbReference type="Pfam" id="PF00091">
    <property type="entry name" value="Tubulin"/>
    <property type="match status" value="1"/>
</dbReference>
<dbReference type="PRINTS" id="PR00423">
    <property type="entry name" value="CELLDVISFTSZ"/>
</dbReference>
<dbReference type="SMART" id="SM00864">
    <property type="entry name" value="Tubulin"/>
    <property type="match status" value="1"/>
</dbReference>
<dbReference type="SMART" id="SM00865">
    <property type="entry name" value="Tubulin_C"/>
    <property type="match status" value="1"/>
</dbReference>
<dbReference type="SUPFAM" id="SSF55307">
    <property type="entry name" value="Tubulin C-terminal domain-like"/>
    <property type="match status" value="1"/>
</dbReference>
<dbReference type="SUPFAM" id="SSF52490">
    <property type="entry name" value="Tubulin nucleotide-binding domain-like"/>
    <property type="match status" value="1"/>
</dbReference>
<dbReference type="PROSITE" id="PS01134">
    <property type="entry name" value="FTSZ_1"/>
    <property type="match status" value="1"/>
</dbReference>
<dbReference type="PROSITE" id="PS01135">
    <property type="entry name" value="FTSZ_2"/>
    <property type="match status" value="1"/>
</dbReference>
<organism>
    <name type="scientific">Mycobacterium bovis (strain ATCC BAA-935 / AF2122/97)</name>
    <dbReference type="NCBI Taxonomy" id="233413"/>
    <lineage>
        <taxon>Bacteria</taxon>
        <taxon>Bacillati</taxon>
        <taxon>Actinomycetota</taxon>
        <taxon>Actinomycetes</taxon>
        <taxon>Mycobacteriales</taxon>
        <taxon>Mycobacteriaceae</taxon>
        <taxon>Mycobacterium</taxon>
        <taxon>Mycobacterium tuberculosis complex</taxon>
    </lineage>
</organism>
<accession>P64171</accession>
<accession>A0A1R3Y0E5</accession>
<accession>O08378</accession>
<accession>X2BKA6</accession>
<keyword id="KW-0131">Cell cycle</keyword>
<keyword id="KW-0132">Cell division</keyword>
<keyword id="KW-0963">Cytoplasm</keyword>
<keyword id="KW-0342">GTP-binding</keyword>
<keyword id="KW-0547">Nucleotide-binding</keyword>
<keyword id="KW-1185">Reference proteome</keyword>
<keyword id="KW-0717">Septation</keyword>
<proteinExistence type="inferred from homology"/>
<protein>
    <recommendedName>
        <fullName evidence="1">Cell division protein FtsZ</fullName>
    </recommendedName>
</protein>
<sequence length="379" mass="38756">MTPPHNYLAVIKVVGIGGGGVNAVNRMIEQGLKGVEFIAINTDAQALLMSDADVKLDVGRDSTRGLGAGADPEVGRKAAEDAKDEIEELLRGADMVFVTAGEGGGTGTGGAPVVASIARKLGALTVGVVTRPFSFEGKRRSNQAENGIAALRESCDTLIVIPNDRLLQMGDAAVSLMDAFRSADEVLLNGVQGITDLITTPGLINVDFADVKGIMSGAGTALMGIGSARGEGRSLKAAEIAINSPLLEASMEGAQGVLMSIAGGSDLGLFEINEAASLVQDAAHPDANIIFGTVIDDSLGDEVRVTVIAAGFDVSGPGRKPVMGETGGAHRIESAKAGKLTSTLFEPVDAVSVPLHTNGATLSIGGDDDDVDVPPFMRR</sequence>
<feature type="chain" id="PRO_0000114366" description="Cell division protein FtsZ">
    <location>
        <begin position="1"/>
        <end position="379"/>
    </location>
</feature>
<feature type="binding site" evidence="1">
    <location>
        <begin position="18"/>
        <end position="22"/>
    </location>
    <ligand>
        <name>GTP</name>
        <dbReference type="ChEBI" id="CHEBI:37565"/>
    </ligand>
</feature>
<feature type="binding site" evidence="1">
    <location>
        <begin position="105"/>
        <end position="107"/>
    </location>
    <ligand>
        <name>GTP</name>
        <dbReference type="ChEBI" id="CHEBI:37565"/>
    </ligand>
</feature>
<feature type="binding site" evidence="1">
    <location>
        <position position="136"/>
    </location>
    <ligand>
        <name>GTP</name>
        <dbReference type="ChEBI" id="CHEBI:37565"/>
    </ligand>
</feature>
<feature type="binding site" evidence="1">
    <location>
        <position position="140"/>
    </location>
    <ligand>
        <name>GTP</name>
        <dbReference type="ChEBI" id="CHEBI:37565"/>
    </ligand>
</feature>
<feature type="binding site" evidence="1">
    <location>
        <position position="184"/>
    </location>
    <ligand>
        <name>GTP</name>
        <dbReference type="ChEBI" id="CHEBI:37565"/>
    </ligand>
</feature>
<evidence type="ECO:0000255" key="1">
    <source>
        <dbReference type="HAMAP-Rule" id="MF_00909"/>
    </source>
</evidence>
<reference key="1">
    <citation type="journal article" date="2003" name="Proc. Natl. Acad. Sci. U.S.A.">
        <title>The complete genome sequence of Mycobacterium bovis.</title>
        <authorList>
            <person name="Garnier T."/>
            <person name="Eiglmeier K."/>
            <person name="Camus J.-C."/>
            <person name="Medina N."/>
            <person name="Mansoor H."/>
            <person name="Pryor M."/>
            <person name="Duthoy S."/>
            <person name="Grondin S."/>
            <person name="Lacroix C."/>
            <person name="Monsempe C."/>
            <person name="Simon S."/>
            <person name="Harris B."/>
            <person name="Atkin R."/>
            <person name="Doggett J."/>
            <person name="Mayes R."/>
            <person name="Keating L."/>
            <person name="Wheeler P.R."/>
            <person name="Parkhill J."/>
            <person name="Barrell B.G."/>
            <person name="Cole S.T."/>
            <person name="Gordon S.V."/>
            <person name="Hewinson R.G."/>
        </authorList>
    </citation>
    <scope>NUCLEOTIDE SEQUENCE [LARGE SCALE GENOMIC DNA]</scope>
    <source>
        <strain>ATCC BAA-935 / AF2122/97</strain>
    </source>
</reference>
<reference key="2">
    <citation type="journal article" date="2017" name="Genome Announc.">
        <title>Updated reference genome sequence and annotation of Mycobacterium bovis AF2122/97.</title>
        <authorList>
            <person name="Malone K.M."/>
            <person name="Farrell D."/>
            <person name="Stuber T.P."/>
            <person name="Schubert O.T."/>
            <person name="Aebersold R."/>
            <person name="Robbe-Austerman S."/>
            <person name="Gordon S.V."/>
        </authorList>
    </citation>
    <scope>NUCLEOTIDE SEQUENCE [LARGE SCALE GENOMIC DNA]</scope>
    <scope>GENOME REANNOTATION</scope>
    <source>
        <strain>ATCC BAA-935 / AF2122/97</strain>
    </source>
</reference>